<reference key="1">
    <citation type="journal article" date="1985" name="Biochem. Int.">
        <title>The amino acid sequence of equine milk lysozyme.</title>
        <authorList>
            <person name="McKenzie H.A."/>
            <person name="Shaw D.C."/>
        </authorList>
    </citation>
    <scope>PROTEIN SEQUENCE</scope>
    <source>
        <tissue>Milk</tissue>
    </source>
</reference>
<reference key="2">
    <citation type="journal article" date="1987" name="FEBS Lett.">
        <title>The calcium-binding property of equine lysozyme.</title>
        <authorList>
            <person name="Nitta K."/>
            <person name="Tsuge H."/>
            <person name="Sugai S."/>
            <person name="Shimazaki K."/>
        </authorList>
    </citation>
    <scope>CALCIUM-BINDING DATA</scope>
    <source>
        <tissue>Milk</tissue>
    </source>
</reference>
<reference key="3">
    <citation type="journal article" date="1990" name="J. Biol. Chem.">
        <title>Crystallization of a calcium-binding lysozyme from horse milk.</title>
        <authorList>
            <person name="Zeng J."/>
            <person name="Rao K.R."/>
            <person name="Brew K."/>
            <person name="Fenna R."/>
        </authorList>
    </citation>
    <scope>PROTEIN SEQUENCE OF 1-35</scope>
    <scope>CRYSTALLIZATION</scope>
    <source>
        <tissue>Milk</tissue>
    </source>
</reference>
<reference key="4">
    <citation type="journal article" date="1991" name="Biochim. Biophys. Acta">
        <title>A structural study of calcium-binding equine lysozyme by two-dimensional 1H-NMR.</title>
        <authorList>
            <person name="Tsuge H."/>
            <person name="Koseki K."/>
            <person name="Miyano M."/>
            <person name="Shimazaki K."/>
            <person name="Chuman T."/>
            <person name="Matsumoto T."/>
            <person name="Noma M."/>
            <person name="Nitta K."/>
            <person name="Sugai S."/>
        </authorList>
    </citation>
    <scope>STRUCTURE BY NMR</scope>
    <source>
        <tissue>Milk</tissue>
    </source>
</reference>
<reference key="5">
    <citation type="journal article" date="1992" name="J. Biochem.">
        <title>Crystallographic studies of a calcium binding lysozyme from equine milk at 2.5-A resolution.</title>
        <authorList>
            <person name="Tsuge H."/>
            <person name="Ago H."/>
            <person name="Noma M."/>
            <person name="Nitta K."/>
            <person name="Sugai S."/>
            <person name="Miyano M."/>
        </authorList>
    </citation>
    <scope>X-RAY CRYSTALLOGRAPHY (2.5 ANGSTROMS)</scope>
    <source>
        <tissue>Milk</tissue>
    </source>
</reference>
<organism>
    <name type="scientific">Equus caballus</name>
    <name type="common">Horse</name>
    <dbReference type="NCBI Taxonomy" id="9796"/>
    <lineage>
        <taxon>Eukaryota</taxon>
        <taxon>Metazoa</taxon>
        <taxon>Chordata</taxon>
        <taxon>Craniata</taxon>
        <taxon>Vertebrata</taxon>
        <taxon>Euteleostomi</taxon>
        <taxon>Mammalia</taxon>
        <taxon>Eutheria</taxon>
        <taxon>Laurasiatheria</taxon>
        <taxon>Perissodactyla</taxon>
        <taxon>Equidae</taxon>
        <taxon>Equus</taxon>
    </lineage>
</organism>
<keyword id="KW-0002">3D-structure</keyword>
<keyword id="KW-0929">Antimicrobial</keyword>
<keyword id="KW-0081">Bacteriolytic enzyme</keyword>
<keyword id="KW-0106">Calcium</keyword>
<keyword id="KW-0903">Direct protein sequencing</keyword>
<keyword id="KW-1015">Disulfide bond</keyword>
<keyword id="KW-0326">Glycosidase</keyword>
<keyword id="KW-0378">Hydrolase</keyword>
<keyword id="KW-0479">Metal-binding</keyword>
<keyword id="KW-1185">Reference proteome</keyword>
<gene>
    <name type="primary">LYZ</name>
</gene>
<dbReference type="EC" id="3.2.1.17"/>
<dbReference type="PIR" id="S07435">
    <property type="entry name" value="S07435"/>
</dbReference>
<dbReference type="PDB" id="2EQL">
    <property type="method" value="X-ray"/>
    <property type="resolution" value="2.50 A"/>
    <property type="chains" value="A=1-129"/>
</dbReference>
<dbReference type="PDBsum" id="2EQL"/>
<dbReference type="SMR" id="P11376"/>
<dbReference type="STRING" id="9796.ENSECAP00000008172"/>
<dbReference type="Allergome" id="12069">
    <property type="allergen name" value="Equ c 6"/>
</dbReference>
<dbReference type="Allergome" id="12070">
    <property type="allergen name" value="Equ c 6.0101"/>
</dbReference>
<dbReference type="CAZy" id="GH22">
    <property type="family name" value="Glycoside Hydrolase Family 22"/>
</dbReference>
<dbReference type="PaxDb" id="9796-ENSECAP00000008172"/>
<dbReference type="HOGENOM" id="CLU_111620_0_1_1"/>
<dbReference type="InParanoid" id="P11376"/>
<dbReference type="EvolutionaryTrace" id="P11376"/>
<dbReference type="Proteomes" id="UP000002281">
    <property type="component" value="Unplaced"/>
</dbReference>
<dbReference type="GO" id="GO:0003796">
    <property type="term" value="F:lysozyme activity"/>
    <property type="evidence" value="ECO:0000318"/>
    <property type="project" value="GO_Central"/>
</dbReference>
<dbReference type="GO" id="GO:0046872">
    <property type="term" value="F:metal ion binding"/>
    <property type="evidence" value="ECO:0007669"/>
    <property type="project" value="UniProtKB-KW"/>
</dbReference>
<dbReference type="GO" id="GO:0042742">
    <property type="term" value="P:defense response to bacterium"/>
    <property type="evidence" value="ECO:0007669"/>
    <property type="project" value="UniProtKB-KW"/>
</dbReference>
<dbReference type="GO" id="GO:0031640">
    <property type="term" value="P:killing of cells of another organism"/>
    <property type="evidence" value="ECO:0007669"/>
    <property type="project" value="UniProtKB-KW"/>
</dbReference>
<dbReference type="CDD" id="cd16897">
    <property type="entry name" value="LYZ_C"/>
    <property type="match status" value="1"/>
</dbReference>
<dbReference type="FunFam" id="1.10.530.10:FF:000001">
    <property type="entry name" value="Lysozyme C"/>
    <property type="match status" value="1"/>
</dbReference>
<dbReference type="Gene3D" id="1.10.530.10">
    <property type="match status" value="1"/>
</dbReference>
<dbReference type="InterPro" id="IPR001916">
    <property type="entry name" value="Glyco_hydro_22"/>
</dbReference>
<dbReference type="InterPro" id="IPR019799">
    <property type="entry name" value="Glyco_hydro_22_CS"/>
</dbReference>
<dbReference type="InterPro" id="IPR000974">
    <property type="entry name" value="Glyco_hydro_22_lys"/>
</dbReference>
<dbReference type="InterPro" id="IPR023346">
    <property type="entry name" value="Lysozyme-like_dom_sf"/>
</dbReference>
<dbReference type="PANTHER" id="PTHR11407">
    <property type="entry name" value="LYSOZYME C"/>
    <property type="match status" value="1"/>
</dbReference>
<dbReference type="PANTHER" id="PTHR11407:SF69">
    <property type="entry name" value="LYSOZYME C, MILK ISOZYME"/>
    <property type="match status" value="1"/>
</dbReference>
<dbReference type="Pfam" id="PF00062">
    <property type="entry name" value="Lys"/>
    <property type="match status" value="1"/>
</dbReference>
<dbReference type="PRINTS" id="PR00137">
    <property type="entry name" value="LYSOZYME"/>
</dbReference>
<dbReference type="PRINTS" id="PR00135">
    <property type="entry name" value="LYZLACT"/>
</dbReference>
<dbReference type="SMART" id="SM00263">
    <property type="entry name" value="LYZ1"/>
    <property type="match status" value="1"/>
</dbReference>
<dbReference type="SUPFAM" id="SSF53955">
    <property type="entry name" value="Lysozyme-like"/>
    <property type="match status" value="1"/>
</dbReference>
<dbReference type="PROSITE" id="PS00128">
    <property type="entry name" value="GLYCOSYL_HYDROL_F22_1"/>
    <property type="match status" value="1"/>
</dbReference>
<dbReference type="PROSITE" id="PS51348">
    <property type="entry name" value="GLYCOSYL_HYDROL_F22_2"/>
    <property type="match status" value="1"/>
</dbReference>
<comment type="function">
    <text>Lysozymes have primarily a bacteriolytic function; those in tissues and body fluids are associated with the monocyte-macrophage system and enhance the activity of immunoagents.</text>
</comment>
<comment type="catalytic activity">
    <reaction>
        <text>Hydrolysis of (1-&gt;4)-beta-linkages between N-acetylmuramic acid and N-acetyl-D-glucosamine residues in a peptidoglycan and between N-acetyl-D-glucosamine residues in chitodextrins.</text>
        <dbReference type="EC" id="3.2.1.17"/>
    </reaction>
</comment>
<comment type="cofactor">
    <cofactor>
        <name>Ca(2+)</name>
        <dbReference type="ChEBI" id="CHEBI:29108"/>
    </cofactor>
    <text>Binds 1 Ca(2+) ion per subunit.</text>
</comment>
<comment type="subunit">
    <text>Monomer.</text>
</comment>
<comment type="miscellaneous">
    <text>Lysozyme C is capable of both hydrolysis and transglycosylation; it also shows a slight esterase activity. It acts rapidly on both peptide-substituted and unsubstituted peptidoglycan, and slowly on chitin oligosaccharides.</text>
</comment>
<comment type="similarity">
    <text evidence="1">Belongs to the glycosyl hydrolase 22 family.</text>
</comment>
<sequence length="129" mass="14653">KVFSKCELAHKLKAQEMDGFGGYSLANWVCMAEYESNFNTRAFNGKNANGSSDYGLFQLNNKWWCKDNKRSSSNACNIMCSKLLDENIDDDISCAKRVVRDPKGMSAWKAWVKHCKDKDLSEYLASCNL</sequence>
<accession>P11376</accession>
<feature type="chain" id="PRO_0000208851" description="Lysozyme C, milk isozyme">
    <location>
        <begin position="1"/>
        <end position="129"/>
    </location>
</feature>
<feature type="domain" description="C-type lysozyme" evidence="1">
    <location>
        <begin position="1"/>
        <end position="129"/>
    </location>
</feature>
<feature type="active site" evidence="1">
    <location>
        <position position="35"/>
    </location>
</feature>
<feature type="active site" evidence="1">
    <location>
        <position position="53"/>
    </location>
</feature>
<feature type="binding site" evidence="2">
    <location>
        <position position="82"/>
    </location>
    <ligand>
        <name>Ca(2+)</name>
        <dbReference type="ChEBI" id="CHEBI:29108"/>
    </ligand>
</feature>
<feature type="binding site" evidence="2">
    <location>
        <position position="85"/>
    </location>
    <ligand>
        <name>Ca(2+)</name>
        <dbReference type="ChEBI" id="CHEBI:29108"/>
    </ligand>
</feature>
<feature type="binding site" evidence="2">
    <location>
        <position position="87"/>
    </location>
    <ligand>
        <name>Ca(2+)</name>
        <dbReference type="ChEBI" id="CHEBI:29108"/>
    </ligand>
</feature>
<feature type="binding site" evidence="2">
    <location>
        <position position="90"/>
    </location>
    <ligand>
        <name>Ca(2+)</name>
        <dbReference type="ChEBI" id="CHEBI:29108"/>
    </ligand>
</feature>
<feature type="binding site" evidence="2">
    <location>
        <position position="91"/>
    </location>
    <ligand>
        <name>Ca(2+)</name>
        <dbReference type="ChEBI" id="CHEBI:29108"/>
    </ligand>
</feature>
<feature type="disulfide bond" evidence="1">
    <location>
        <begin position="6"/>
        <end position="127"/>
    </location>
</feature>
<feature type="disulfide bond" evidence="1">
    <location>
        <begin position="30"/>
        <end position="115"/>
    </location>
</feature>
<feature type="disulfide bond" evidence="1">
    <location>
        <begin position="65"/>
        <end position="80"/>
    </location>
</feature>
<feature type="disulfide bond" evidence="1">
    <location>
        <begin position="76"/>
        <end position="94"/>
    </location>
</feature>
<feature type="helix" evidence="3">
    <location>
        <begin position="5"/>
        <end position="13"/>
    </location>
</feature>
<feature type="turn" evidence="3">
    <location>
        <begin position="14"/>
        <end position="19"/>
    </location>
</feature>
<feature type="helix" evidence="3">
    <location>
        <begin position="20"/>
        <end position="22"/>
    </location>
</feature>
<feature type="helix" evidence="3">
    <location>
        <begin position="25"/>
        <end position="36"/>
    </location>
</feature>
<feature type="strand" evidence="3">
    <location>
        <begin position="37"/>
        <end position="39"/>
    </location>
</feature>
<feature type="strand" evidence="3">
    <location>
        <begin position="43"/>
        <end position="45"/>
    </location>
</feature>
<feature type="strand" evidence="3">
    <location>
        <begin position="52"/>
        <end position="54"/>
    </location>
</feature>
<feature type="turn" evidence="3">
    <location>
        <begin position="55"/>
        <end position="58"/>
    </location>
</feature>
<feature type="helix" evidence="3">
    <location>
        <begin position="61"/>
        <end position="64"/>
    </location>
</feature>
<feature type="strand" evidence="3">
    <location>
        <begin position="68"/>
        <end position="71"/>
    </location>
</feature>
<feature type="helix" evidence="3">
    <location>
        <begin position="80"/>
        <end position="83"/>
    </location>
</feature>
<feature type="strand" evidence="3">
    <location>
        <begin position="84"/>
        <end position="86"/>
    </location>
</feature>
<feature type="helix" evidence="3">
    <location>
        <begin position="89"/>
        <end position="98"/>
    </location>
</feature>
<feature type="helix" evidence="3">
    <location>
        <begin position="104"/>
        <end position="107"/>
    </location>
</feature>
<feature type="helix" evidence="3">
    <location>
        <begin position="109"/>
        <end position="114"/>
    </location>
</feature>
<feature type="turn" evidence="3">
    <location>
        <begin position="115"/>
        <end position="117"/>
    </location>
</feature>
<feature type="turn" evidence="3">
    <location>
        <begin position="121"/>
        <end position="126"/>
    </location>
</feature>
<proteinExistence type="evidence at protein level"/>
<name>LYSC1_HORSE</name>
<evidence type="ECO:0000255" key="1">
    <source>
        <dbReference type="PROSITE-ProRule" id="PRU00680"/>
    </source>
</evidence>
<evidence type="ECO:0000305" key="2">
    <source>
    </source>
</evidence>
<evidence type="ECO:0007829" key="3">
    <source>
        <dbReference type="PDB" id="2EQL"/>
    </source>
</evidence>
<protein>
    <recommendedName>
        <fullName>Lysozyme C, milk isozyme</fullName>
        <ecNumber>3.2.1.17</ecNumber>
    </recommendedName>
    <alternativeName>
        <fullName>1,4-beta-N-acetylmuramidase C</fullName>
    </alternativeName>
</protein>